<comment type="function">
    <text>Pulmonary surfactant associated proteins promote alveolar stability by lowering the surface tension at the air-liquid interface in the peripheral air spaces.</text>
</comment>
<comment type="subcellular location">
    <subcellularLocation>
        <location>Secreted</location>
        <location>Extracellular space</location>
        <location>Surface film</location>
    </subcellularLocation>
</comment>
<comment type="miscellaneous">
    <text>Pulmonary surfactant consists of 90% lipid and 10% protein. There are 4 surfactant-associated proteins: 2 collagenous, carbohydrate-binding glycoproteins (SP-A and SP-D) and 2 small hydrophobic proteins (SP-B and SP-C).</text>
</comment>
<gene>
    <name type="primary">SFTPC</name>
    <name type="synonym">SFTP2</name>
</gene>
<organism>
    <name type="scientific">Canis lupus familiaris</name>
    <name type="common">Dog</name>
    <name type="synonym">Canis familiaris</name>
    <dbReference type="NCBI Taxonomy" id="9615"/>
    <lineage>
        <taxon>Eukaryota</taxon>
        <taxon>Metazoa</taxon>
        <taxon>Chordata</taxon>
        <taxon>Craniata</taxon>
        <taxon>Vertebrata</taxon>
        <taxon>Euteleostomi</taxon>
        <taxon>Mammalia</taxon>
        <taxon>Eutheria</taxon>
        <taxon>Laurasiatheria</taxon>
        <taxon>Carnivora</taxon>
        <taxon>Caniformia</taxon>
        <taxon>Canidae</taxon>
        <taxon>Canis</taxon>
    </lineage>
</organism>
<feature type="chain" id="PRO_0000183014" description="Surfactant protein C">
    <location>
        <begin position="1"/>
        <end position="34"/>
    </location>
</feature>
<feature type="lipid moiety-binding region" description="S-palmitoyl cysteine" evidence="2">
    <location>
        <position position="4"/>
    </location>
</feature>
<proteinExistence type="evidence at protein level"/>
<reference key="1">
    <citation type="journal article" date="1991" name="FEBS Lett.">
        <title>Canine hydrophobic surfactant polypeptide SP-C. A lipopeptide with one thioester-linked palmitoyl group.</title>
        <authorList>
            <person name="Johansson J."/>
            <person name="Persson P."/>
            <person name="Loewenadler B."/>
            <person name="Robertson B."/>
            <person name="Joernvall H."/>
            <person name="Curstedt T."/>
        </authorList>
    </citation>
    <scope>PROTEIN SEQUENCE</scope>
    <scope>PALMITOYLATION AT CYS-4</scope>
</reference>
<name>PSPC_CANLF</name>
<evidence type="ECO:0000250" key="1">
    <source>
        <dbReference type="UniProtKB" id="P11686"/>
    </source>
</evidence>
<evidence type="ECO:0000269" key="2">
    <source>
    </source>
</evidence>
<protein>
    <recommendedName>
        <fullName evidence="1">Surfactant protein C</fullName>
        <shortName>SP-C</shortName>
    </recommendedName>
    <alternativeName>
        <fullName>Pulmonary surfactant-associated protein C</fullName>
    </alternativeName>
    <alternativeName>
        <fullName>Pulmonary surfactant-associated proteolipid SPL(Val)</fullName>
    </alternativeName>
</protein>
<keyword id="KW-0903">Direct protein sequencing</keyword>
<keyword id="KW-0305">Gaseous exchange</keyword>
<keyword id="KW-0449">Lipoprotein</keyword>
<keyword id="KW-0564">Palmitate</keyword>
<keyword id="KW-1185">Reference proteome</keyword>
<keyword id="KW-0964">Secreted</keyword>
<keyword id="KW-0767">Surface film</keyword>
<dbReference type="PIR" id="B61249">
    <property type="entry name" value="LNDGC1"/>
</dbReference>
<dbReference type="SMR" id="P22397"/>
<dbReference type="SwissPalm" id="P22397"/>
<dbReference type="PaxDb" id="9612-ENSCAFP00000014140"/>
<dbReference type="eggNOG" id="ENOG502S6QH">
    <property type="taxonomic scope" value="Eukaryota"/>
</dbReference>
<dbReference type="InParanoid" id="P22397"/>
<dbReference type="OrthoDB" id="9888901at2759"/>
<dbReference type="Proteomes" id="UP000002254">
    <property type="component" value="Unplaced"/>
</dbReference>
<dbReference type="Proteomes" id="UP000694429">
    <property type="component" value="Unplaced"/>
</dbReference>
<dbReference type="Proteomes" id="UP000694542">
    <property type="component" value="Unplaced"/>
</dbReference>
<dbReference type="Proteomes" id="UP000805418">
    <property type="component" value="Unplaced"/>
</dbReference>
<dbReference type="GO" id="GO:0005576">
    <property type="term" value="C:extracellular region"/>
    <property type="evidence" value="ECO:0007669"/>
    <property type="project" value="UniProtKB-SubCell"/>
</dbReference>
<dbReference type="GO" id="GO:0007585">
    <property type="term" value="P:respiratory gaseous exchange by respiratory system"/>
    <property type="evidence" value="ECO:0007669"/>
    <property type="project" value="UniProtKB-KW"/>
</dbReference>
<dbReference type="InterPro" id="IPR015091">
    <property type="entry name" value="Surfactant_protein_propep"/>
</dbReference>
<dbReference type="Pfam" id="PF08999">
    <property type="entry name" value="SP_C-Propep"/>
    <property type="match status" value="1"/>
</dbReference>
<sequence>GIPCFPSSLKRLLIIVVVIVLVVVVIVGALLMGL</sequence>
<accession>P22397</accession>